<evidence type="ECO:0000255" key="1">
    <source>
        <dbReference type="HAMAP-Rule" id="MF_01325"/>
    </source>
</evidence>
<evidence type="ECO:0000305" key="2"/>
<keyword id="KW-0488">Methylation</keyword>
<keyword id="KW-1185">Reference proteome</keyword>
<keyword id="KW-0687">Ribonucleoprotein</keyword>
<keyword id="KW-0689">Ribosomal protein</keyword>
<keyword id="KW-0694">RNA-binding</keyword>
<keyword id="KW-0699">rRNA-binding</keyword>
<sequence>MIGLVGKKVGMTRIFTEDGVSIPVTVIEVEANRVTQVKDLANDGYRAIQVTTGAKKANRVTKPEAGHFAKAGVEAGRGLWEFRLAEGEEFTVGQSISVELFADVKKVDVTGTSKGKGFAGTVKRWNFRTQDATHGNSLSHRVPGSIGQNQTPGKVFKGKKMAGQMGNERVTVQSLDVVRVDAERNLLLVKGAVPGATGSDLIVKPAVKA</sequence>
<organism>
    <name type="scientific">Escherichia coli O45:K1 (strain S88 / ExPEC)</name>
    <dbReference type="NCBI Taxonomy" id="585035"/>
    <lineage>
        <taxon>Bacteria</taxon>
        <taxon>Pseudomonadati</taxon>
        <taxon>Pseudomonadota</taxon>
        <taxon>Gammaproteobacteria</taxon>
        <taxon>Enterobacterales</taxon>
        <taxon>Enterobacteriaceae</taxon>
        <taxon>Escherichia</taxon>
    </lineage>
</organism>
<name>RL3_ECO45</name>
<dbReference type="EMBL" id="CU928161">
    <property type="protein sequence ID" value="CAR04924.1"/>
    <property type="molecule type" value="Genomic_DNA"/>
</dbReference>
<dbReference type="RefSeq" id="WP_000579833.1">
    <property type="nucleotide sequence ID" value="NC_011742.1"/>
</dbReference>
<dbReference type="EMDB" id="EMD-7970"/>
<dbReference type="EMDB" id="EMD-8826"/>
<dbReference type="EMDB" id="EMD-8829"/>
<dbReference type="SMR" id="B7MCT5"/>
<dbReference type="IntAct" id="B7MCT5">
    <property type="interactions" value="1"/>
</dbReference>
<dbReference type="GeneID" id="86948184"/>
<dbReference type="KEGG" id="ecz:ECS88_3707"/>
<dbReference type="HOGENOM" id="CLU_044142_4_1_6"/>
<dbReference type="Proteomes" id="UP000000747">
    <property type="component" value="Chromosome"/>
</dbReference>
<dbReference type="GO" id="GO:0022625">
    <property type="term" value="C:cytosolic large ribosomal subunit"/>
    <property type="evidence" value="ECO:0007669"/>
    <property type="project" value="TreeGrafter"/>
</dbReference>
<dbReference type="GO" id="GO:0019843">
    <property type="term" value="F:rRNA binding"/>
    <property type="evidence" value="ECO:0007669"/>
    <property type="project" value="UniProtKB-UniRule"/>
</dbReference>
<dbReference type="GO" id="GO:0003735">
    <property type="term" value="F:structural constituent of ribosome"/>
    <property type="evidence" value="ECO:0007669"/>
    <property type="project" value="InterPro"/>
</dbReference>
<dbReference type="GO" id="GO:0006412">
    <property type="term" value="P:translation"/>
    <property type="evidence" value="ECO:0007669"/>
    <property type="project" value="UniProtKB-UniRule"/>
</dbReference>
<dbReference type="FunFam" id="2.40.30.10:FF:000004">
    <property type="entry name" value="50S ribosomal protein L3"/>
    <property type="match status" value="1"/>
</dbReference>
<dbReference type="FunFam" id="3.30.160.810:FF:000001">
    <property type="entry name" value="50S ribosomal protein L3"/>
    <property type="match status" value="1"/>
</dbReference>
<dbReference type="Gene3D" id="3.30.160.810">
    <property type="match status" value="1"/>
</dbReference>
<dbReference type="Gene3D" id="2.40.30.10">
    <property type="entry name" value="Translation factors"/>
    <property type="match status" value="1"/>
</dbReference>
<dbReference type="HAMAP" id="MF_01325_B">
    <property type="entry name" value="Ribosomal_uL3_B"/>
    <property type="match status" value="1"/>
</dbReference>
<dbReference type="InterPro" id="IPR000597">
    <property type="entry name" value="Ribosomal_uL3"/>
</dbReference>
<dbReference type="InterPro" id="IPR019927">
    <property type="entry name" value="Ribosomal_uL3_bac/org-type"/>
</dbReference>
<dbReference type="InterPro" id="IPR019926">
    <property type="entry name" value="Ribosomal_uL3_CS"/>
</dbReference>
<dbReference type="InterPro" id="IPR009000">
    <property type="entry name" value="Transl_B-barrel_sf"/>
</dbReference>
<dbReference type="NCBIfam" id="TIGR03625">
    <property type="entry name" value="L3_bact"/>
    <property type="match status" value="1"/>
</dbReference>
<dbReference type="PANTHER" id="PTHR11229">
    <property type="entry name" value="50S RIBOSOMAL PROTEIN L3"/>
    <property type="match status" value="1"/>
</dbReference>
<dbReference type="PANTHER" id="PTHR11229:SF16">
    <property type="entry name" value="LARGE RIBOSOMAL SUBUNIT PROTEIN UL3C"/>
    <property type="match status" value="1"/>
</dbReference>
<dbReference type="Pfam" id="PF00297">
    <property type="entry name" value="Ribosomal_L3"/>
    <property type="match status" value="1"/>
</dbReference>
<dbReference type="SUPFAM" id="SSF50447">
    <property type="entry name" value="Translation proteins"/>
    <property type="match status" value="1"/>
</dbReference>
<dbReference type="PROSITE" id="PS00474">
    <property type="entry name" value="RIBOSOMAL_L3"/>
    <property type="match status" value="1"/>
</dbReference>
<feature type="chain" id="PRO_1000141859" description="Large ribosomal subunit protein uL3">
    <location>
        <begin position="1"/>
        <end position="209"/>
    </location>
</feature>
<feature type="modified residue" description="N5-methylglutamine" evidence="1">
    <location>
        <position position="150"/>
    </location>
</feature>
<accession>B7MCT5</accession>
<protein>
    <recommendedName>
        <fullName evidence="1">Large ribosomal subunit protein uL3</fullName>
    </recommendedName>
    <alternativeName>
        <fullName evidence="2">50S ribosomal protein L3</fullName>
    </alternativeName>
</protein>
<gene>
    <name evidence="1" type="primary">rplC</name>
    <name type="ordered locus">ECS88_3707</name>
</gene>
<proteinExistence type="inferred from homology"/>
<reference key="1">
    <citation type="journal article" date="2009" name="PLoS Genet.">
        <title>Organised genome dynamics in the Escherichia coli species results in highly diverse adaptive paths.</title>
        <authorList>
            <person name="Touchon M."/>
            <person name="Hoede C."/>
            <person name="Tenaillon O."/>
            <person name="Barbe V."/>
            <person name="Baeriswyl S."/>
            <person name="Bidet P."/>
            <person name="Bingen E."/>
            <person name="Bonacorsi S."/>
            <person name="Bouchier C."/>
            <person name="Bouvet O."/>
            <person name="Calteau A."/>
            <person name="Chiapello H."/>
            <person name="Clermont O."/>
            <person name="Cruveiller S."/>
            <person name="Danchin A."/>
            <person name="Diard M."/>
            <person name="Dossat C."/>
            <person name="Karoui M.E."/>
            <person name="Frapy E."/>
            <person name="Garry L."/>
            <person name="Ghigo J.M."/>
            <person name="Gilles A.M."/>
            <person name="Johnson J."/>
            <person name="Le Bouguenec C."/>
            <person name="Lescat M."/>
            <person name="Mangenot S."/>
            <person name="Martinez-Jehanne V."/>
            <person name="Matic I."/>
            <person name="Nassif X."/>
            <person name="Oztas S."/>
            <person name="Petit M.A."/>
            <person name="Pichon C."/>
            <person name="Rouy Z."/>
            <person name="Ruf C.S."/>
            <person name="Schneider D."/>
            <person name="Tourret J."/>
            <person name="Vacherie B."/>
            <person name="Vallenet D."/>
            <person name="Medigue C."/>
            <person name="Rocha E.P.C."/>
            <person name="Denamur E."/>
        </authorList>
    </citation>
    <scope>NUCLEOTIDE SEQUENCE [LARGE SCALE GENOMIC DNA]</scope>
    <source>
        <strain>S88 / ExPEC</strain>
    </source>
</reference>
<comment type="function">
    <text evidence="1">One of the primary rRNA binding proteins, it binds directly near the 3'-end of the 23S rRNA, where it nucleates assembly of the 50S subunit.</text>
</comment>
<comment type="subunit">
    <text evidence="1">Part of the 50S ribosomal subunit. Forms a cluster with proteins L14 and L19.</text>
</comment>
<comment type="PTM">
    <text evidence="1">Methylated by PrmB.</text>
</comment>
<comment type="similarity">
    <text evidence="1">Belongs to the universal ribosomal protein uL3 family.</text>
</comment>